<comment type="function">
    <text evidence="1">Catalyzes the attachment of tryptophan to tRNA(Trp).</text>
</comment>
<comment type="catalytic activity">
    <reaction evidence="1">
        <text>tRNA(Trp) + L-tryptophan + ATP = L-tryptophyl-tRNA(Trp) + AMP + diphosphate + H(+)</text>
        <dbReference type="Rhea" id="RHEA:24080"/>
        <dbReference type="Rhea" id="RHEA-COMP:9671"/>
        <dbReference type="Rhea" id="RHEA-COMP:9705"/>
        <dbReference type="ChEBI" id="CHEBI:15378"/>
        <dbReference type="ChEBI" id="CHEBI:30616"/>
        <dbReference type="ChEBI" id="CHEBI:33019"/>
        <dbReference type="ChEBI" id="CHEBI:57912"/>
        <dbReference type="ChEBI" id="CHEBI:78442"/>
        <dbReference type="ChEBI" id="CHEBI:78535"/>
        <dbReference type="ChEBI" id="CHEBI:456215"/>
        <dbReference type="EC" id="6.1.1.2"/>
    </reaction>
</comment>
<comment type="subunit">
    <text evidence="1">Homodimer.</text>
</comment>
<comment type="subcellular location">
    <subcellularLocation>
        <location evidence="1">Cytoplasm</location>
    </subcellularLocation>
</comment>
<comment type="similarity">
    <text evidence="1">Belongs to the class-I aminoacyl-tRNA synthetase family.</text>
</comment>
<evidence type="ECO:0000255" key="1">
    <source>
        <dbReference type="HAMAP-Rule" id="MF_00140"/>
    </source>
</evidence>
<evidence type="ECO:0000269" key="2">
    <source>
    </source>
</evidence>
<evidence type="ECO:0007829" key="3">
    <source>
        <dbReference type="PDB" id="3PRH"/>
    </source>
</evidence>
<name>SYW_BACSU</name>
<proteinExistence type="evidence at protein level"/>
<reference key="1">
    <citation type="journal article" date="1988" name="Gene">
        <title>Cloning and nucleotide sequence of the structural gene coding for Bacillus subtilis tryptophanyl-tRNA synthetase.</title>
        <authorList>
            <person name="Chow K.C."/>
            <person name="Wong T.F."/>
        </authorList>
    </citation>
    <scope>NUCLEOTIDE SEQUENCE [GENOMIC DNA]</scope>
</reference>
<reference key="2">
    <citation type="journal article" date="1997" name="Nature">
        <title>The complete genome sequence of the Gram-positive bacterium Bacillus subtilis.</title>
        <authorList>
            <person name="Kunst F."/>
            <person name="Ogasawara N."/>
            <person name="Moszer I."/>
            <person name="Albertini A.M."/>
            <person name="Alloni G."/>
            <person name="Azevedo V."/>
            <person name="Bertero M.G."/>
            <person name="Bessieres P."/>
            <person name="Bolotin A."/>
            <person name="Borchert S."/>
            <person name="Borriss R."/>
            <person name="Boursier L."/>
            <person name="Brans A."/>
            <person name="Braun M."/>
            <person name="Brignell S.C."/>
            <person name="Bron S."/>
            <person name="Brouillet S."/>
            <person name="Bruschi C.V."/>
            <person name="Caldwell B."/>
            <person name="Capuano V."/>
            <person name="Carter N.M."/>
            <person name="Choi S.-K."/>
            <person name="Codani J.-J."/>
            <person name="Connerton I.F."/>
            <person name="Cummings N.J."/>
            <person name="Daniel R.A."/>
            <person name="Denizot F."/>
            <person name="Devine K.M."/>
            <person name="Duesterhoeft A."/>
            <person name="Ehrlich S.D."/>
            <person name="Emmerson P.T."/>
            <person name="Entian K.-D."/>
            <person name="Errington J."/>
            <person name="Fabret C."/>
            <person name="Ferrari E."/>
            <person name="Foulger D."/>
            <person name="Fritz C."/>
            <person name="Fujita M."/>
            <person name="Fujita Y."/>
            <person name="Fuma S."/>
            <person name="Galizzi A."/>
            <person name="Galleron N."/>
            <person name="Ghim S.-Y."/>
            <person name="Glaser P."/>
            <person name="Goffeau A."/>
            <person name="Golightly E.J."/>
            <person name="Grandi G."/>
            <person name="Guiseppi G."/>
            <person name="Guy B.J."/>
            <person name="Haga K."/>
            <person name="Haiech J."/>
            <person name="Harwood C.R."/>
            <person name="Henaut A."/>
            <person name="Hilbert H."/>
            <person name="Holsappel S."/>
            <person name="Hosono S."/>
            <person name="Hullo M.-F."/>
            <person name="Itaya M."/>
            <person name="Jones L.-M."/>
            <person name="Joris B."/>
            <person name="Karamata D."/>
            <person name="Kasahara Y."/>
            <person name="Klaerr-Blanchard M."/>
            <person name="Klein C."/>
            <person name="Kobayashi Y."/>
            <person name="Koetter P."/>
            <person name="Koningstein G."/>
            <person name="Krogh S."/>
            <person name="Kumano M."/>
            <person name="Kurita K."/>
            <person name="Lapidus A."/>
            <person name="Lardinois S."/>
            <person name="Lauber J."/>
            <person name="Lazarevic V."/>
            <person name="Lee S.-M."/>
            <person name="Levine A."/>
            <person name="Liu H."/>
            <person name="Masuda S."/>
            <person name="Mauel C."/>
            <person name="Medigue C."/>
            <person name="Medina N."/>
            <person name="Mellado R.P."/>
            <person name="Mizuno M."/>
            <person name="Moestl D."/>
            <person name="Nakai S."/>
            <person name="Noback M."/>
            <person name="Noone D."/>
            <person name="O'Reilly M."/>
            <person name="Ogawa K."/>
            <person name="Ogiwara A."/>
            <person name="Oudega B."/>
            <person name="Park S.-H."/>
            <person name="Parro V."/>
            <person name="Pohl T.M."/>
            <person name="Portetelle D."/>
            <person name="Porwollik S."/>
            <person name="Prescott A.M."/>
            <person name="Presecan E."/>
            <person name="Pujic P."/>
            <person name="Purnelle B."/>
            <person name="Rapoport G."/>
            <person name="Rey M."/>
            <person name="Reynolds S."/>
            <person name="Rieger M."/>
            <person name="Rivolta C."/>
            <person name="Rocha E."/>
            <person name="Roche B."/>
            <person name="Rose M."/>
            <person name="Sadaie Y."/>
            <person name="Sato T."/>
            <person name="Scanlan E."/>
            <person name="Schleich S."/>
            <person name="Schroeter R."/>
            <person name="Scoffone F."/>
            <person name="Sekiguchi J."/>
            <person name="Sekowska A."/>
            <person name="Seror S.J."/>
            <person name="Serror P."/>
            <person name="Shin B.-S."/>
            <person name="Soldo B."/>
            <person name="Sorokin A."/>
            <person name="Tacconi E."/>
            <person name="Takagi T."/>
            <person name="Takahashi H."/>
            <person name="Takemaru K."/>
            <person name="Takeuchi M."/>
            <person name="Tamakoshi A."/>
            <person name="Tanaka T."/>
            <person name="Terpstra P."/>
            <person name="Tognoni A."/>
            <person name="Tosato V."/>
            <person name="Uchiyama S."/>
            <person name="Vandenbol M."/>
            <person name="Vannier F."/>
            <person name="Vassarotti A."/>
            <person name="Viari A."/>
            <person name="Wambutt R."/>
            <person name="Wedler E."/>
            <person name="Wedler H."/>
            <person name="Weitzenegger T."/>
            <person name="Winters P."/>
            <person name="Wipat A."/>
            <person name="Yamamoto H."/>
            <person name="Yamane K."/>
            <person name="Yasumoto K."/>
            <person name="Yata K."/>
            <person name="Yoshida K."/>
            <person name="Yoshikawa H.-F."/>
            <person name="Zumstein E."/>
            <person name="Yoshikawa H."/>
            <person name="Danchin A."/>
        </authorList>
    </citation>
    <scope>NUCLEOTIDE SEQUENCE [LARGE SCALE GENOMIC DNA]</scope>
    <source>
        <strain>168</strain>
    </source>
</reference>
<reference key="3">
    <citation type="journal article" date="1989" name="J. Biol. Chem.">
        <title>Tryptophanyl-tRNA synthetase from Bacillus subtilis. Characterization and role of hydrophobicity in substrate recognition.</title>
        <authorList>
            <person name="Xu Z.J."/>
            <person name="Love M.L."/>
            <person name="Ma L.Y.Y."/>
            <person name="Blum M."/>
            <person name="Bronskill P.M."/>
            <person name="Bernstein J."/>
            <person name="Grey A.A."/>
            <person name="Hofmann T."/>
            <person name="Camerman N."/>
            <person name="Wong J.T.F."/>
        </authorList>
    </citation>
    <scope>PROTEIN SEQUENCE OF 1-32</scope>
</reference>
<reference key="4">
    <citation type="journal article" date="1992" name="J. Biol. Chem.">
        <title>Mutational identification of an essential tryptophan in tryptophanyl-tRNA synthetase of Bacillus subtilis.</title>
        <authorList>
            <person name="Chow K.C."/>
            <person name="Xue H."/>
            <person name="Shi W."/>
            <person name="Wong J.T."/>
        </authorList>
    </citation>
    <scope>MUTAGENESIS OF TRP-92</scope>
</reference>
<accession>P21656</accession>
<gene>
    <name evidence="1" type="primary">trpS</name>
    <name type="ordered locus">BSU11420</name>
</gene>
<dbReference type="EC" id="6.1.1.2" evidence="1"/>
<dbReference type="EMBL" id="M24068">
    <property type="protein sequence ID" value="AAA22874.1"/>
    <property type="molecule type" value="Genomic_DNA"/>
</dbReference>
<dbReference type="EMBL" id="AL009126">
    <property type="protein sequence ID" value="CAB12999.1"/>
    <property type="molecule type" value="Genomic_DNA"/>
</dbReference>
<dbReference type="PIR" id="JT0481">
    <property type="entry name" value="YWBS"/>
</dbReference>
<dbReference type="RefSeq" id="NP_389024.1">
    <property type="nucleotide sequence ID" value="NC_000964.3"/>
</dbReference>
<dbReference type="RefSeq" id="WP_003245134.1">
    <property type="nucleotide sequence ID" value="NZ_OZ025638.1"/>
</dbReference>
<dbReference type="PDB" id="3PRH">
    <property type="method" value="X-ray"/>
    <property type="resolution" value="2.80 A"/>
    <property type="chains" value="A/B=1-329"/>
</dbReference>
<dbReference type="PDBsum" id="3PRH"/>
<dbReference type="SMR" id="P21656"/>
<dbReference type="FunCoup" id="P21656">
    <property type="interactions" value="617"/>
</dbReference>
<dbReference type="STRING" id="224308.BSU11420"/>
<dbReference type="jPOST" id="P21656"/>
<dbReference type="PaxDb" id="224308-BSU11420"/>
<dbReference type="EnsemblBacteria" id="CAB12999">
    <property type="protein sequence ID" value="CAB12999"/>
    <property type="gene ID" value="BSU_11420"/>
</dbReference>
<dbReference type="GeneID" id="939361"/>
<dbReference type="KEGG" id="bsu:BSU11420"/>
<dbReference type="PATRIC" id="fig|224308.179.peg.1228"/>
<dbReference type="eggNOG" id="COG0180">
    <property type="taxonomic scope" value="Bacteria"/>
</dbReference>
<dbReference type="InParanoid" id="P21656"/>
<dbReference type="OrthoDB" id="9801042at2"/>
<dbReference type="PhylomeDB" id="P21656"/>
<dbReference type="BioCyc" id="BSUB:BSU11420-MONOMER"/>
<dbReference type="SABIO-RK" id="P21656"/>
<dbReference type="EvolutionaryTrace" id="P21656"/>
<dbReference type="Proteomes" id="UP000001570">
    <property type="component" value="Chromosome"/>
</dbReference>
<dbReference type="GO" id="GO:0005829">
    <property type="term" value="C:cytosol"/>
    <property type="evidence" value="ECO:0000318"/>
    <property type="project" value="GO_Central"/>
</dbReference>
<dbReference type="GO" id="GO:0005524">
    <property type="term" value="F:ATP binding"/>
    <property type="evidence" value="ECO:0007669"/>
    <property type="project" value="UniProtKB-UniRule"/>
</dbReference>
<dbReference type="GO" id="GO:0004830">
    <property type="term" value="F:tryptophan-tRNA ligase activity"/>
    <property type="evidence" value="ECO:0000318"/>
    <property type="project" value="GO_Central"/>
</dbReference>
<dbReference type="GO" id="GO:0006436">
    <property type="term" value="P:tryptophanyl-tRNA aminoacylation"/>
    <property type="evidence" value="ECO:0000318"/>
    <property type="project" value="GO_Central"/>
</dbReference>
<dbReference type="CDD" id="cd00806">
    <property type="entry name" value="TrpRS_core"/>
    <property type="match status" value="1"/>
</dbReference>
<dbReference type="FunFam" id="1.10.240.10:FF:000002">
    <property type="entry name" value="Tryptophan--tRNA ligase"/>
    <property type="match status" value="1"/>
</dbReference>
<dbReference type="Gene3D" id="3.40.50.620">
    <property type="entry name" value="HUPs"/>
    <property type="match status" value="1"/>
</dbReference>
<dbReference type="Gene3D" id="1.10.240.10">
    <property type="entry name" value="Tyrosyl-Transfer RNA Synthetase"/>
    <property type="match status" value="1"/>
</dbReference>
<dbReference type="HAMAP" id="MF_00140_B">
    <property type="entry name" value="Trp_tRNA_synth_B"/>
    <property type="match status" value="1"/>
</dbReference>
<dbReference type="InterPro" id="IPR001412">
    <property type="entry name" value="aa-tRNA-synth_I_CS"/>
</dbReference>
<dbReference type="InterPro" id="IPR002305">
    <property type="entry name" value="aa-tRNA-synth_Ic"/>
</dbReference>
<dbReference type="InterPro" id="IPR014729">
    <property type="entry name" value="Rossmann-like_a/b/a_fold"/>
</dbReference>
<dbReference type="InterPro" id="IPR002306">
    <property type="entry name" value="Trp-tRNA-ligase"/>
</dbReference>
<dbReference type="InterPro" id="IPR024109">
    <property type="entry name" value="Trp-tRNA-ligase_bac-type"/>
</dbReference>
<dbReference type="InterPro" id="IPR050203">
    <property type="entry name" value="Trp-tRNA_synthetase"/>
</dbReference>
<dbReference type="NCBIfam" id="TIGR00233">
    <property type="entry name" value="trpS"/>
    <property type="match status" value="1"/>
</dbReference>
<dbReference type="PANTHER" id="PTHR43766">
    <property type="entry name" value="TRYPTOPHAN--TRNA LIGASE, MITOCHONDRIAL"/>
    <property type="match status" value="1"/>
</dbReference>
<dbReference type="PANTHER" id="PTHR43766:SF1">
    <property type="entry name" value="TRYPTOPHAN--TRNA LIGASE, MITOCHONDRIAL"/>
    <property type="match status" value="1"/>
</dbReference>
<dbReference type="Pfam" id="PF00579">
    <property type="entry name" value="tRNA-synt_1b"/>
    <property type="match status" value="1"/>
</dbReference>
<dbReference type="PRINTS" id="PR01039">
    <property type="entry name" value="TRNASYNTHTRP"/>
</dbReference>
<dbReference type="SUPFAM" id="SSF52374">
    <property type="entry name" value="Nucleotidylyl transferase"/>
    <property type="match status" value="1"/>
</dbReference>
<dbReference type="PROSITE" id="PS00178">
    <property type="entry name" value="AA_TRNA_LIGASE_I"/>
    <property type="match status" value="1"/>
</dbReference>
<organism>
    <name type="scientific">Bacillus subtilis (strain 168)</name>
    <dbReference type="NCBI Taxonomy" id="224308"/>
    <lineage>
        <taxon>Bacteria</taxon>
        <taxon>Bacillati</taxon>
        <taxon>Bacillota</taxon>
        <taxon>Bacilli</taxon>
        <taxon>Bacillales</taxon>
        <taxon>Bacillaceae</taxon>
        <taxon>Bacillus</taxon>
    </lineage>
</organism>
<sequence length="330" mass="37197">MKQTIFSGIQPSGSVTLGNYIGAMKQFVELQHDYNSYFCIVDQHAITVPQDRLELRKNIRNLAALYLAVGLDPEKATLFIQSEVPAHAQAGWMMQCVAYIGELERMTQFKDKSKGNEAVVSGLLTYPPLMAADILLYGTDLVPVGEDQKQHLELTRNLAERFNKKYNDIFTIPEVKIPKVGARIMSLNDPLKKMSKSDPNQKAYITLLDEPKQLEKKIKSAVTDSEGIVKFDKENKPGVSNLLTIYSILGNTTIEELEAKYEGKGYGEFKGDLAEVVVNALKPIQDRYYELIESEELDRILDEGAERANRTANKMLKKMENAMGLGRKRR</sequence>
<feature type="chain" id="PRO_0000136602" description="Tryptophan--tRNA ligase">
    <location>
        <begin position="1"/>
        <end position="330"/>
    </location>
</feature>
<feature type="short sequence motif" description="'HIGH' region" evidence="1">
    <location>
        <begin position="11"/>
        <end position="19"/>
    </location>
</feature>
<feature type="short sequence motif" description="'KMSKS' region" evidence="1">
    <location>
        <begin position="193"/>
        <end position="197"/>
    </location>
</feature>
<feature type="binding site" evidence="1">
    <location>
        <begin position="10"/>
        <end position="12"/>
    </location>
    <ligand>
        <name>ATP</name>
        <dbReference type="ChEBI" id="CHEBI:30616"/>
    </ligand>
</feature>
<feature type="binding site" evidence="1">
    <location>
        <begin position="18"/>
        <end position="19"/>
    </location>
    <ligand>
        <name>ATP</name>
        <dbReference type="ChEBI" id="CHEBI:30616"/>
    </ligand>
</feature>
<feature type="binding site" evidence="1">
    <location>
        <position position="133"/>
    </location>
    <ligand>
        <name>L-tryptophan</name>
        <dbReference type="ChEBI" id="CHEBI:57912"/>
    </ligand>
</feature>
<feature type="binding site" evidence="1">
    <location>
        <begin position="145"/>
        <end position="147"/>
    </location>
    <ligand>
        <name>ATP</name>
        <dbReference type="ChEBI" id="CHEBI:30616"/>
    </ligand>
</feature>
<feature type="binding site" evidence="1">
    <location>
        <position position="184"/>
    </location>
    <ligand>
        <name>ATP</name>
        <dbReference type="ChEBI" id="CHEBI:30616"/>
    </ligand>
</feature>
<feature type="binding site" evidence="1">
    <location>
        <begin position="193"/>
        <end position="197"/>
    </location>
    <ligand>
        <name>ATP</name>
        <dbReference type="ChEBI" id="CHEBI:30616"/>
    </ligand>
</feature>
<feature type="mutagenesis site" description="Loss of activity." evidence="2">
    <original>W</original>
    <variation>F</variation>
    <variation>A</variation>
    <variation>Q</variation>
    <location>
        <position position="92"/>
    </location>
</feature>
<feature type="strand" evidence="3">
    <location>
        <begin position="4"/>
        <end position="9"/>
    </location>
</feature>
<feature type="helix" evidence="3">
    <location>
        <begin position="17"/>
        <end position="22"/>
    </location>
</feature>
<feature type="helix" evidence="3">
    <location>
        <begin position="24"/>
        <end position="29"/>
    </location>
</feature>
<feature type="turn" evidence="3">
    <location>
        <begin position="30"/>
        <end position="33"/>
    </location>
</feature>
<feature type="strand" evidence="3">
    <location>
        <begin position="34"/>
        <end position="40"/>
    </location>
</feature>
<feature type="helix" evidence="3">
    <location>
        <begin position="42"/>
        <end position="45"/>
    </location>
</feature>
<feature type="helix" evidence="3">
    <location>
        <begin position="52"/>
        <end position="68"/>
    </location>
</feature>
<feature type="turn" evidence="3">
    <location>
        <begin position="73"/>
        <end position="75"/>
    </location>
</feature>
<feature type="strand" evidence="3">
    <location>
        <begin position="76"/>
        <end position="80"/>
    </location>
</feature>
<feature type="helix" evidence="3">
    <location>
        <begin position="81"/>
        <end position="83"/>
    </location>
</feature>
<feature type="helix" evidence="3">
    <location>
        <begin position="86"/>
        <end position="95"/>
    </location>
</feature>
<feature type="helix" evidence="3">
    <location>
        <begin position="100"/>
        <end position="104"/>
    </location>
</feature>
<feature type="helix" evidence="3">
    <location>
        <begin position="121"/>
        <end position="124"/>
    </location>
</feature>
<feature type="helix" evidence="3">
    <location>
        <begin position="127"/>
        <end position="135"/>
    </location>
</feature>
<feature type="turn" evidence="3">
    <location>
        <begin position="136"/>
        <end position="138"/>
    </location>
</feature>
<feature type="helix" evidence="3">
    <location>
        <begin position="149"/>
        <end position="165"/>
    </location>
</feature>
<feature type="helix" evidence="3">
    <location>
        <begin position="211"/>
        <end position="219"/>
    </location>
</feature>
<feature type="turn" evidence="3">
    <location>
        <begin position="233"/>
        <end position="235"/>
    </location>
</feature>
<feature type="helix" evidence="3">
    <location>
        <begin position="237"/>
        <end position="250"/>
    </location>
</feature>
<feature type="helix" evidence="3">
    <location>
        <begin position="254"/>
        <end position="260"/>
    </location>
</feature>
<feature type="turn" evidence="3">
    <location>
        <begin position="261"/>
        <end position="263"/>
    </location>
</feature>
<feature type="helix" evidence="3">
    <location>
        <begin position="266"/>
        <end position="291"/>
    </location>
</feature>
<feature type="helix" evidence="3">
    <location>
        <begin position="295"/>
        <end position="323"/>
    </location>
</feature>
<keyword id="KW-0002">3D-structure</keyword>
<keyword id="KW-0030">Aminoacyl-tRNA synthetase</keyword>
<keyword id="KW-0067">ATP-binding</keyword>
<keyword id="KW-0963">Cytoplasm</keyword>
<keyword id="KW-0903">Direct protein sequencing</keyword>
<keyword id="KW-0436">Ligase</keyword>
<keyword id="KW-0547">Nucleotide-binding</keyword>
<keyword id="KW-0648">Protein biosynthesis</keyword>
<keyword id="KW-1185">Reference proteome</keyword>
<protein>
    <recommendedName>
        <fullName evidence="1">Tryptophan--tRNA ligase</fullName>
        <ecNumber evidence="1">6.1.1.2</ecNumber>
    </recommendedName>
    <alternativeName>
        <fullName evidence="1">Tryptophanyl-tRNA synthetase</fullName>
        <shortName evidence="1">TrpRS</shortName>
    </alternativeName>
</protein>